<accession>B0S2N4</accession>
<organism>
    <name type="scientific">Finegoldia magna (strain ATCC 29328 / DSM 20472 / WAL 2508)</name>
    <name type="common">Peptostreptococcus magnus</name>
    <dbReference type="NCBI Taxonomy" id="334413"/>
    <lineage>
        <taxon>Bacteria</taxon>
        <taxon>Bacillati</taxon>
        <taxon>Bacillota</taxon>
        <taxon>Tissierellia</taxon>
        <taxon>Tissierellales</taxon>
        <taxon>Peptoniphilaceae</taxon>
        <taxon>Finegoldia</taxon>
    </lineage>
</organism>
<comment type="function">
    <text evidence="1">ATP-dependent serine protease that mediates the selective degradation of mutant and abnormal proteins as well as certain short-lived regulatory proteins. Required for cellular homeostasis and for survival from DNA damage and developmental changes induced by stress. Degrades polypeptides processively to yield small peptide fragments that are 5 to 10 amino acids long. Binds to DNA in a double-stranded, site-specific manner.</text>
</comment>
<comment type="catalytic activity">
    <reaction evidence="1">
        <text>Hydrolysis of proteins in presence of ATP.</text>
        <dbReference type="EC" id="3.4.21.53"/>
    </reaction>
</comment>
<comment type="subunit">
    <text evidence="1">Homohexamer. Organized in a ring with a central cavity.</text>
</comment>
<comment type="subcellular location">
    <subcellularLocation>
        <location evidence="1">Cytoplasm</location>
    </subcellularLocation>
</comment>
<comment type="induction">
    <text evidence="1">By heat shock.</text>
</comment>
<comment type="similarity">
    <text evidence="1">Belongs to the peptidase S16 family.</text>
</comment>
<sequence>MKEYYTISEKKLPIIALRGLWLFPNNIQHFEVGREVSLNALNASLLRNSEIFICTQKDPMLENITKEDFYHTGVLASIKQTIKMPNGNIRVLVEAYDRAKIVDFVENDSFLEANVEVMEYDKTKYHPTDKSLTMIRMIISSFESLAEIIKKPLPQDLLGGLLNEEDPSSLIDTIAMLISLNDKDSILLLETLDMDERIELVYKFVIKEIEFLKIKEDIEERTNKEISDTQKEYFLQEQLRQIKMELGEEYDIEDTDDYANRVKKLKLKKDSEEHVLKEINRLSSMNPNNPESTVIRNYIDQVLDIPWNKKSKSSIDLKVAEKVLNDGHFGLEDVKKRILEYLAVKKMTGSLKGPILCLVGPPGVGKTSIARSIADATNRKFVSMRLGGVRDEAEIRGHRKTYIGAMPGRIITQLQKAKKLNPVFLLDEIDKLASDFRGDPASALLEVLDPEQNSEFTDNYIEIPVDLSDVLFITTANSQEQIPDALLDRMEVIRVTSYTDSEKFEIANRYLLPRQLKENGMDKSQFHITRDAIYTIINNYTRESGVRELERNIGKVIRKAVVKIVKDDVKKVVVNNKNLEKFLGSKLVLDDEIPREDTVGVVNGLAWTQVGGVILTIEANVMDGSGKTQLTGKLGDVMKESAMAAISYIRSNQEALGIKGEFYKEKDIHIHVPEGAVPKDGPSAGVTMVTALVSALTGRKVKHDFAMTGEITLTGRVLAIGGVKEKVLAAHRYGINKVFLPKENKRDIQDIDPKIRQKIKFYFTSNVKEILDEVLI</sequence>
<dbReference type="EC" id="3.4.21.53" evidence="1"/>
<dbReference type="EMBL" id="AP008971">
    <property type="protein sequence ID" value="BAG08624.1"/>
    <property type="molecule type" value="Genomic_DNA"/>
</dbReference>
<dbReference type="RefSeq" id="WP_002839518.1">
    <property type="nucleotide sequence ID" value="NC_010376.1"/>
</dbReference>
<dbReference type="SMR" id="B0S2N4"/>
<dbReference type="STRING" id="334413.FMG_1206"/>
<dbReference type="MEROPS" id="S16.001"/>
<dbReference type="KEGG" id="fma:FMG_1206"/>
<dbReference type="eggNOG" id="COG0466">
    <property type="taxonomic scope" value="Bacteria"/>
</dbReference>
<dbReference type="HOGENOM" id="CLU_004109_4_3_9"/>
<dbReference type="Proteomes" id="UP000001319">
    <property type="component" value="Chromosome"/>
</dbReference>
<dbReference type="GO" id="GO:0005737">
    <property type="term" value="C:cytoplasm"/>
    <property type="evidence" value="ECO:0007669"/>
    <property type="project" value="UniProtKB-SubCell"/>
</dbReference>
<dbReference type="GO" id="GO:0005524">
    <property type="term" value="F:ATP binding"/>
    <property type="evidence" value="ECO:0007669"/>
    <property type="project" value="UniProtKB-UniRule"/>
</dbReference>
<dbReference type="GO" id="GO:0016887">
    <property type="term" value="F:ATP hydrolysis activity"/>
    <property type="evidence" value="ECO:0007669"/>
    <property type="project" value="UniProtKB-UniRule"/>
</dbReference>
<dbReference type="GO" id="GO:0004176">
    <property type="term" value="F:ATP-dependent peptidase activity"/>
    <property type="evidence" value="ECO:0007669"/>
    <property type="project" value="UniProtKB-UniRule"/>
</dbReference>
<dbReference type="GO" id="GO:0043565">
    <property type="term" value="F:sequence-specific DNA binding"/>
    <property type="evidence" value="ECO:0007669"/>
    <property type="project" value="UniProtKB-UniRule"/>
</dbReference>
<dbReference type="GO" id="GO:0004252">
    <property type="term" value="F:serine-type endopeptidase activity"/>
    <property type="evidence" value="ECO:0007669"/>
    <property type="project" value="UniProtKB-UniRule"/>
</dbReference>
<dbReference type="GO" id="GO:0034605">
    <property type="term" value="P:cellular response to heat"/>
    <property type="evidence" value="ECO:0007669"/>
    <property type="project" value="UniProtKB-UniRule"/>
</dbReference>
<dbReference type="GO" id="GO:0006515">
    <property type="term" value="P:protein quality control for misfolded or incompletely synthesized proteins"/>
    <property type="evidence" value="ECO:0007669"/>
    <property type="project" value="UniProtKB-UniRule"/>
</dbReference>
<dbReference type="CDD" id="cd19500">
    <property type="entry name" value="RecA-like_Lon"/>
    <property type="match status" value="1"/>
</dbReference>
<dbReference type="FunFam" id="3.40.50.300:FF:000021">
    <property type="entry name" value="Lon protease homolog"/>
    <property type="match status" value="1"/>
</dbReference>
<dbReference type="Gene3D" id="1.10.8.60">
    <property type="match status" value="1"/>
</dbReference>
<dbReference type="Gene3D" id="1.20.5.5270">
    <property type="match status" value="1"/>
</dbReference>
<dbReference type="Gene3D" id="1.20.58.1480">
    <property type="match status" value="1"/>
</dbReference>
<dbReference type="Gene3D" id="3.30.230.10">
    <property type="match status" value="1"/>
</dbReference>
<dbReference type="Gene3D" id="2.30.130.40">
    <property type="entry name" value="LON domain-like"/>
    <property type="match status" value="1"/>
</dbReference>
<dbReference type="Gene3D" id="3.40.50.300">
    <property type="entry name" value="P-loop containing nucleotide triphosphate hydrolases"/>
    <property type="match status" value="1"/>
</dbReference>
<dbReference type="HAMAP" id="MF_01973">
    <property type="entry name" value="lon_bact"/>
    <property type="match status" value="1"/>
</dbReference>
<dbReference type="InterPro" id="IPR003593">
    <property type="entry name" value="AAA+_ATPase"/>
</dbReference>
<dbReference type="InterPro" id="IPR003959">
    <property type="entry name" value="ATPase_AAA_core"/>
</dbReference>
<dbReference type="InterPro" id="IPR027543">
    <property type="entry name" value="Lon_bac"/>
</dbReference>
<dbReference type="InterPro" id="IPR004815">
    <property type="entry name" value="Lon_bac/euk-typ"/>
</dbReference>
<dbReference type="InterPro" id="IPR054594">
    <property type="entry name" value="Lon_lid"/>
</dbReference>
<dbReference type="InterPro" id="IPR008269">
    <property type="entry name" value="Lon_proteolytic"/>
</dbReference>
<dbReference type="InterPro" id="IPR027065">
    <property type="entry name" value="Lon_Prtase"/>
</dbReference>
<dbReference type="InterPro" id="IPR003111">
    <property type="entry name" value="Lon_prtase_N"/>
</dbReference>
<dbReference type="InterPro" id="IPR046336">
    <property type="entry name" value="Lon_prtase_N_sf"/>
</dbReference>
<dbReference type="InterPro" id="IPR027417">
    <property type="entry name" value="P-loop_NTPase"/>
</dbReference>
<dbReference type="InterPro" id="IPR008268">
    <property type="entry name" value="Peptidase_S16_AS"/>
</dbReference>
<dbReference type="InterPro" id="IPR015947">
    <property type="entry name" value="PUA-like_sf"/>
</dbReference>
<dbReference type="InterPro" id="IPR020568">
    <property type="entry name" value="Ribosomal_Su5_D2-typ_SF"/>
</dbReference>
<dbReference type="InterPro" id="IPR014721">
    <property type="entry name" value="Ribsml_uS5_D2-typ_fold_subgr"/>
</dbReference>
<dbReference type="NCBIfam" id="TIGR00763">
    <property type="entry name" value="lon"/>
    <property type="match status" value="1"/>
</dbReference>
<dbReference type="PANTHER" id="PTHR10046">
    <property type="entry name" value="ATP DEPENDENT LON PROTEASE FAMILY MEMBER"/>
    <property type="match status" value="1"/>
</dbReference>
<dbReference type="Pfam" id="PF00004">
    <property type="entry name" value="AAA"/>
    <property type="match status" value="1"/>
</dbReference>
<dbReference type="Pfam" id="PF05362">
    <property type="entry name" value="Lon_C"/>
    <property type="match status" value="1"/>
</dbReference>
<dbReference type="Pfam" id="PF22667">
    <property type="entry name" value="Lon_lid"/>
    <property type="match status" value="1"/>
</dbReference>
<dbReference type="Pfam" id="PF02190">
    <property type="entry name" value="LON_substr_bdg"/>
    <property type="match status" value="1"/>
</dbReference>
<dbReference type="PIRSF" id="PIRSF001174">
    <property type="entry name" value="Lon_proteas"/>
    <property type="match status" value="1"/>
</dbReference>
<dbReference type="PRINTS" id="PR00830">
    <property type="entry name" value="ENDOLAPTASE"/>
</dbReference>
<dbReference type="SMART" id="SM00382">
    <property type="entry name" value="AAA"/>
    <property type="match status" value="1"/>
</dbReference>
<dbReference type="SMART" id="SM00464">
    <property type="entry name" value="LON"/>
    <property type="match status" value="1"/>
</dbReference>
<dbReference type="SUPFAM" id="SSF52540">
    <property type="entry name" value="P-loop containing nucleoside triphosphate hydrolases"/>
    <property type="match status" value="1"/>
</dbReference>
<dbReference type="SUPFAM" id="SSF88697">
    <property type="entry name" value="PUA domain-like"/>
    <property type="match status" value="1"/>
</dbReference>
<dbReference type="SUPFAM" id="SSF54211">
    <property type="entry name" value="Ribosomal protein S5 domain 2-like"/>
    <property type="match status" value="1"/>
</dbReference>
<dbReference type="PROSITE" id="PS51787">
    <property type="entry name" value="LON_N"/>
    <property type="match status" value="1"/>
</dbReference>
<dbReference type="PROSITE" id="PS51786">
    <property type="entry name" value="LON_PROTEOLYTIC"/>
    <property type="match status" value="1"/>
</dbReference>
<dbReference type="PROSITE" id="PS01046">
    <property type="entry name" value="LON_SER"/>
    <property type="match status" value="1"/>
</dbReference>
<name>LON_FINM2</name>
<keyword id="KW-0067">ATP-binding</keyword>
<keyword id="KW-0963">Cytoplasm</keyword>
<keyword id="KW-0378">Hydrolase</keyword>
<keyword id="KW-0547">Nucleotide-binding</keyword>
<keyword id="KW-0645">Protease</keyword>
<keyword id="KW-1185">Reference proteome</keyword>
<keyword id="KW-0720">Serine protease</keyword>
<keyword id="KW-0346">Stress response</keyword>
<feature type="chain" id="PRO_0000396564" description="Lon protease">
    <location>
        <begin position="1"/>
        <end position="776"/>
    </location>
</feature>
<feature type="domain" description="Lon N-terminal" evidence="3">
    <location>
        <begin position="12"/>
        <end position="209"/>
    </location>
</feature>
<feature type="domain" description="Lon proteolytic" evidence="2">
    <location>
        <begin position="596"/>
        <end position="776"/>
    </location>
</feature>
<feature type="active site" evidence="1">
    <location>
        <position position="683"/>
    </location>
</feature>
<feature type="active site" evidence="1">
    <location>
        <position position="726"/>
    </location>
</feature>
<feature type="binding site" evidence="1">
    <location>
        <begin position="360"/>
        <end position="367"/>
    </location>
    <ligand>
        <name>ATP</name>
        <dbReference type="ChEBI" id="CHEBI:30616"/>
    </ligand>
</feature>
<proteinExistence type="inferred from homology"/>
<protein>
    <recommendedName>
        <fullName evidence="1">Lon protease</fullName>
        <ecNumber evidence="1">3.4.21.53</ecNumber>
    </recommendedName>
    <alternativeName>
        <fullName evidence="1">ATP-dependent protease La</fullName>
    </alternativeName>
</protein>
<reference key="1">
    <citation type="journal article" date="2008" name="DNA Res.">
        <title>Complete genome sequence of Finegoldia magna, an anaerobic opportunistic pathogen.</title>
        <authorList>
            <person name="Goto T."/>
            <person name="Yamashita A."/>
            <person name="Hirakawa H."/>
            <person name="Matsutani M."/>
            <person name="Todo K."/>
            <person name="Ohshima K."/>
            <person name="Toh H."/>
            <person name="Miyamoto K."/>
            <person name="Kuhara S."/>
            <person name="Hattori M."/>
            <person name="Shimizu T."/>
            <person name="Akimoto S."/>
        </authorList>
    </citation>
    <scope>NUCLEOTIDE SEQUENCE [LARGE SCALE GENOMIC DNA]</scope>
    <source>
        <strain>ATCC 29328 / DSM 20472 / WAL 2508</strain>
    </source>
</reference>
<evidence type="ECO:0000255" key="1">
    <source>
        <dbReference type="HAMAP-Rule" id="MF_01973"/>
    </source>
</evidence>
<evidence type="ECO:0000255" key="2">
    <source>
        <dbReference type="PROSITE-ProRule" id="PRU01122"/>
    </source>
</evidence>
<evidence type="ECO:0000255" key="3">
    <source>
        <dbReference type="PROSITE-ProRule" id="PRU01123"/>
    </source>
</evidence>
<gene>
    <name evidence="1" type="primary">lon</name>
    <name type="ordered locus">FMG_1206</name>
</gene>